<organism>
    <name type="scientific">Salmonella newport (strain SL254)</name>
    <dbReference type="NCBI Taxonomy" id="423368"/>
    <lineage>
        <taxon>Bacteria</taxon>
        <taxon>Pseudomonadati</taxon>
        <taxon>Pseudomonadota</taxon>
        <taxon>Gammaproteobacteria</taxon>
        <taxon>Enterobacterales</taxon>
        <taxon>Enterobacteriaceae</taxon>
        <taxon>Salmonella</taxon>
    </lineage>
</organism>
<dbReference type="EC" id="1.1.1.37" evidence="1"/>
<dbReference type="EMBL" id="CP001113">
    <property type="protein sequence ID" value="ACF63951.1"/>
    <property type="molecule type" value="Genomic_DNA"/>
</dbReference>
<dbReference type="RefSeq" id="WP_000861590.1">
    <property type="nucleotide sequence ID" value="NZ_CCMR01000001.1"/>
</dbReference>
<dbReference type="SMR" id="B4T769"/>
<dbReference type="KEGG" id="see:SNSL254_A3622"/>
<dbReference type="HOGENOM" id="CLU_047181_1_0_6"/>
<dbReference type="Proteomes" id="UP000008824">
    <property type="component" value="Chromosome"/>
</dbReference>
<dbReference type="GO" id="GO:0005737">
    <property type="term" value="C:cytoplasm"/>
    <property type="evidence" value="ECO:0007669"/>
    <property type="project" value="TreeGrafter"/>
</dbReference>
<dbReference type="GO" id="GO:0030060">
    <property type="term" value="F:L-malate dehydrogenase (NAD+) activity"/>
    <property type="evidence" value="ECO:0007669"/>
    <property type="project" value="UniProtKB-UniRule"/>
</dbReference>
<dbReference type="GO" id="GO:0006108">
    <property type="term" value="P:malate metabolic process"/>
    <property type="evidence" value="ECO:0007669"/>
    <property type="project" value="InterPro"/>
</dbReference>
<dbReference type="GO" id="GO:0006099">
    <property type="term" value="P:tricarboxylic acid cycle"/>
    <property type="evidence" value="ECO:0007669"/>
    <property type="project" value="UniProtKB-UniRule"/>
</dbReference>
<dbReference type="CDD" id="cd01337">
    <property type="entry name" value="MDH_glyoxysomal_mitochondrial"/>
    <property type="match status" value="1"/>
</dbReference>
<dbReference type="FunFam" id="3.40.50.720:FF:000017">
    <property type="entry name" value="Malate dehydrogenase"/>
    <property type="match status" value="1"/>
</dbReference>
<dbReference type="FunFam" id="3.90.110.10:FF:000001">
    <property type="entry name" value="Malate dehydrogenase"/>
    <property type="match status" value="1"/>
</dbReference>
<dbReference type="Gene3D" id="3.90.110.10">
    <property type="entry name" value="Lactate dehydrogenase/glycoside hydrolase, family 4, C-terminal"/>
    <property type="match status" value="1"/>
</dbReference>
<dbReference type="Gene3D" id="3.40.50.720">
    <property type="entry name" value="NAD(P)-binding Rossmann-like Domain"/>
    <property type="match status" value="1"/>
</dbReference>
<dbReference type="HAMAP" id="MF_01516">
    <property type="entry name" value="Malate_dehydrog_1"/>
    <property type="match status" value="1"/>
</dbReference>
<dbReference type="InterPro" id="IPR001557">
    <property type="entry name" value="L-lactate/malate_DH"/>
</dbReference>
<dbReference type="InterPro" id="IPR022383">
    <property type="entry name" value="Lactate/malate_DH_C"/>
</dbReference>
<dbReference type="InterPro" id="IPR001236">
    <property type="entry name" value="Lactate/malate_DH_N"/>
</dbReference>
<dbReference type="InterPro" id="IPR015955">
    <property type="entry name" value="Lactate_DH/Glyco_Ohase_4_C"/>
</dbReference>
<dbReference type="InterPro" id="IPR001252">
    <property type="entry name" value="Malate_DH_AS"/>
</dbReference>
<dbReference type="InterPro" id="IPR010097">
    <property type="entry name" value="Malate_DH_type1"/>
</dbReference>
<dbReference type="InterPro" id="IPR023958">
    <property type="entry name" value="Malate_DH_type1_bac"/>
</dbReference>
<dbReference type="InterPro" id="IPR036291">
    <property type="entry name" value="NAD(P)-bd_dom_sf"/>
</dbReference>
<dbReference type="NCBIfam" id="TIGR01772">
    <property type="entry name" value="MDH_euk_gproteo"/>
    <property type="match status" value="1"/>
</dbReference>
<dbReference type="PANTHER" id="PTHR11540">
    <property type="entry name" value="MALATE AND LACTATE DEHYDROGENASE"/>
    <property type="match status" value="1"/>
</dbReference>
<dbReference type="PANTHER" id="PTHR11540:SF16">
    <property type="entry name" value="MALATE DEHYDROGENASE, MITOCHONDRIAL"/>
    <property type="match status" value="1"/>
</dbReference>
<dbReference type="Pfam" id="PF02866">
    <property type="entry name" value="Ldh_1_C"/>
    <property type="match status" value="1"/>
</dbReference>
<dbReference type="Pfam" id="PF00056">
    <property type="entry name" value="Ldh_1_N"/>
    <property type="match status" value="1"/>
</dbReference>
<dbReference type="PIRSF" id="PIRSF000102">
    <property type="entry name" value="Lac_mal_DH"/>
    <property type="match status" value="1"/>
</dbReference>
<dbReference type="SUPFAM" id="SSF56327">
    <property type="entry name" value="LDH C-terminal domain-like"/>
    <property type="match status" value="1"/>
</dbReference>
<dbReference type="SUPFAM" id="SSF51735">
    <property type="entry name" value="NAD(P)-binding Rossmann-fold domains"/>
    <property type="match status" value="1"/>
</dbReference>
<dbReference type="PROSITE" id="PS00068">
    <property type="entry name" value="MDH"/>
    <property type="match status" value="1"/>
</dbReference>
<feature type="chain" id="PRO_1000191594" description="Malate dehydrogenase">
    <location>
        <begin position="1"/>
        <end position="312"/>
    </location>
</feature>
<feature type="active site" description="Proton acceptor" evidence="1">
    <location>
        <position position="177"/>
    </location>
</feature>
<feature type="binding site" evidence="1">
    <location>
        <begin position="7"/>
        <end position="13"/>
    </location>
    <ligand>
        <name>NAD(+)</name>
        <dbReference type="ChEBI" id="CHEBI:57540"/>
    </ligand>
</feature>
<feature type="binding site" evidence="1">
    <location>
        <position position="34"/>
    </location>
    <ligand>
        <name>NAD(+)</name>
        <dbReference type="ChEBI" id="CHEBI:57540"/>
    </ligand>
</feature>
<feature type="binding site" evidence="1">
    <location>
        <position position="81"/>
    </location>
    <ligand>
        <name>substrate</name>
    </ligand>
</feature>
<feature type="binding site" evidence="1">
    <location>
        <position position="87"/>
    </location>
    <ligand>
        <name>substrate</name>
    </ligand>
</feature>
<feature type="binding site" evidence="1">
    <location>
        <position position="94"/>
    </location>
    <ligand>
        <name>NAD(+)</name>
        <dbReference type="ChEBI" id="CHEBI:57540"/>
    </ligand>
</feature>
<feature type="binding site" evidence="1">
    <location>
        <begin position="117"/>
        <end position="119"/>
    </location>
    <ligand>
        <name>NAD(+)</name>
        <dbReference type="ChEBI" id="CHEBI:57540"/>
    </ligand>
</feature>
<feature type="binding site" evidence="1">
    <location>
        <position position="119"/>
    </location>
    <ligand>
        <name>substrate</name>
    </ligand>
</feature>
<feature type="binding site" evidence="1">
    <location>
        <position position="153"/>
    </location>
    <ligand>
        <name>substrate</name>
    </ligand>
</feature>
<feature type="binding site" evidence="1">
    <location>
        <position position="227"/>
    </location>
    <ligand>
        <name>NAD(+)</name>
        <dbReference type="ChEBI" id="CHEBI:57540"/>
    </ligand>
</feature>
<protein>
    <recommendedName>
        <fullName evidence="1">Malate dehydrogenase</fullName>
        <ecNumber evidence="1">1.1.1.37</ecNumber>
    </recommendedName>
</protein>
<gene>
    <name evidence="1" type="primary">mdh</name>
    <name type="ordered locus">SNSL254_A3622</name>
</gene>
<sequence length="312" mass="32519">MKVAVLGAAGGIGQALALLLKNQLPSGSELSLYDIAPVTPGVAVDLSHIPTAVKIKGFSGEDATPALEGADVVLISAGVARKPGMDRSDLFNVNAGIVKNLVQQIAKTCPKACVGIITNPVNTTVAIAAEVLKKAGVYDKNKLFGVTTLDIIRSNTFVAELKGKRPTEVEVPVIGGHSGVTILPLLSQIPGVSFTEQEAAELTKRIQNAGTEVVEAKAGGGSATLSMGQAAARFGLSLVRALQGEKGVVECAYVEGDGQYARFFSQPLLLGKNGVEERKSIGTLSAFEQHSLDAMLDTLKKDIQLGEDFINK</sequence>
<comment type="function">
    <text evidence="1">Catalyzes the reversible oxidation of malate to oxaloacetate.</text>
</comment>
<comment type="catalytic activity">
    <reaction evidence="1">
        <text>(S)-malate + NAD(+) = oxaloacetate + NADH + H(+)</text>
        <dbReference type="Rhea" id="RHEA:21432"/>
        <dbReference type="ChEBI" id="CHEBI:15378"/>
        <dbReference type="ChEBI" id="CHEBI:15589"/>
        <dbReference type="ChEBI" id="CHEBI:16452"/>
        <dbReference type="ChEBI" id="CHEBI:57540"/>
        <dbReference type="ChEBI" id="CHEBI:57945"/>
        <dbReference type="EC" id="1.1.1.37"/>
    </reaction>
</comment>
<comment type="subunit">
    <text evidence="1">Homodimer.</text>
</comment>
<comment type="similarity">
    <text evidence="1">Belongs to the LDH/MDH superfamily. MDH type 1 family.</text>
</comment>
<accession>B4T769</accession>
<proteinExistence type="inferred from homology"/>
<evidence type="ECO:0000255" key="1">
    <source>
        <dbReference type="HAMAP-Rule" id="MF_01516"/>
    </source>
</evidence>
<reference key="1">
    <citation type="journal article" date="2011" name="J. Bacteriol.">
        <title>Comparative genomics of 28 Salmonella enterica isolates: evidence for CRISPR-mediated adaptive sublineage evolution.</title>
        <authorList>
            <person name="Fricke W.F."/>
            <person name="Mammel M.K."/>
            <person name="McDermott P.F."/>
            <person name="Tartera C."/>
            <person name="White D.G."/>
            <person name="Leclerc J.E."/>
            <person name="Ravel J."/>
            <person name="Cebula T.A."/>
        </authorList>
    </citation>
    <scope>NUCLEOTIDE SEQUENCE [LARGE SCALE GENOMIC DNA]</scope>
    <source>
        <strain>SL254</strain>
    </source>
</reference>
<keyword id="KW-0520">NAD</keyword>
<keyword id="KW-0560">Oxidoreductase</keyword>
<keyword id="KW-0816">Tricarboxylic acid cycle</keyword>
<name>MDH_SALNS</name>